<reference key="1">
    <citation type="journal article" date="1995" name="Yeast">
        <title>Sequence of a 9.8 kb segment of yeast chromosome II including the three genes of the MAL3 locus and three unidentified open reading frames.</title>
        <authorList>
            <person name="Feuermann M."/>
            <person name="Charbonnel L."/>
            <person name="De Montigny J."/>
            <person name="Bloch J.C."/>
            <person name="Potier S."/>
            <person name="Souciet J.-L."/>
        </authorList>
    </citation>
    <scope>NUCLEOTIDE SEQUENCE [GENOMIC DNA]</scope>
    <source>
        <strain>ATCC 204508 / S288c</strain>
    </source>
</reference>
<reference key="2">
    <citation type="journal article" date="1994" name="EMBO J.">
        <title>Complete DNA sequence of yeast chromosome II.</title>
        <authorList>
            <person name="Feldmann H."/>
            <person name="Aigle M."/>
            <person name="Aljinovic G."/>
            <person name="Andre B."/>
            <person name="Baclet M.C."/>
            <person name="Barthe C."/>
            <person name="Baur A."/>
            <person name="Becam A.-M."/>
            <person name="Biteau N."/>
            <person name="Boles E."/>
            <person name="Brandt T."/>
            <person name="Brendel M."/>
            <person name="Brueckner M."/>
            <person name="Bussereau F."/>
            <person name="Christiansen C."/>
            <person name="Contreras R."/>
            <person name="Crouzet M."/>
            <person name="Cziepluch C."/>
            <person name="Demolis N."/>
            <person name="Delaveau T."/>
            <person name="Doignon F."/>
            <person name="Domdey H."/>
            <person name="Duesterhus S."/>
            <person name="Dubois E."/>
            <person name="Dujon B."/>
            <person name="El Bakkoury M."/>
            <person name="Entian K.-D."/>
            <person name="Feuermann M."/>
            <person name="Fiers W."/>
            <person name="Fobo G.M."/>
            <person name="Fritz C."/>
            <person name="Gassenhuber J."/>
            <person name="Glansdorff N."/>
            <person name="Goffeau A."/>
            <person name="Grivell L.A."/>
            <person name="de Haan M."/>
            <person name="Hein C."/>
            <person name="Herbert C.J."/>
            <person name="Hollenberg C.P."/>
            <person name="Holmstroem K."/>
            <person name="Jacq C."/>
            <person name="Jacquet M."/>
            <person name="Jauniaux J.-C."/>
            <person name="Jonniaux J.-L."/>
            <person name="Kallesoee T."/>
            <person name="Kiesau P."/>
            <person name="Kirchrath L."/>
            <person name="Koetter P."/>
            <person name="Korol S."/>
            <person name="Liebl S."/>
            <person name="Logghe M."/>
            <person name="Lohan A.J.E."/>
            <person name="Louis E.J."/>
            <person name="Li Z.Y."/>
            <person name="Maat M.J."/>
            <person name="Mallet L."/>
            <person name="Mannhaupt G."/>
            <person name="Messenguy F."/>
            <person name="Miosga T."/>
            <person name="Molemans F."/>
            <person name="Mueller S."/>
            <person name="Nasr F."/>
            <person name="Obermaier B."/>
            <person name="Perea J."/>
            <person name="Pierard A."/>
            <person name="Piravandi E."/>
            <person name="Pohl F.M."/>
            <person name="Pohl T.M."/>
            <person name="Potier S."/>
            <person name="Proft M."/>
            <person name="Purnelle B."/>
            <person name="Ramezani Rad M."/>
            <person name="Rieger M."/>
            <person name="Rose M."/>
            <person name="Schaaff-Gerstenschlaeger I."/>
            <person name="Scherens B."/>
            <person name="Schwarzlose C."/>
            <person name="Skala J."/>
            <person name="Slonimski P.P."/>
            <person name="Smits P.H.M."/>
            <person name="Souciet J.-L."/>
            <person name="Steensma H.Y."/>
            <person name="Stucka R."/>
            <person name="Urrestarazu L.A."/>
            <person name="van der Aart Q.J.M."/>
            <person name="Van Dyck L."/>
            <person name="Vassarotti A."/>
            <person name="Vetter I."/>
            <person name="Vierendeels F."/>
            <person name="Vissers S."/>
            <person name="Wagner G."/>
            <person name="de Wergifosse P."/>
            <person name="Wolfe K.H."/>
            <person name="Zagulski M."/>
            <person name="Zimmermann F.K."/>
            <person name="Mewes H.-W."/>
            <person name="Kleine K."/>
        </authorList>
    </citation>
    <scope>NUCLEOTIDE SEQUENCE [LARGE SCALE GENOMIC DNA]</scope>
    <source>
        <strain>ATCC 204508 / S288c</strain>
    </source>
</reference>
<reference key="3">
    <citation type="journal article" date="2014" name="G3 (Bethesda)">
        <title>The reference genome sequence of Saccharomyces cerevisiae: Then and now.</title>
        <authorList>
            <person name="Engel S.R."/>
            <person name="Dietrich F.S."/>
            <person name="Fisk D.G."/>
            <person name="Binkley G."/>
            <person name="Balakrishnan R."/>
            <person name="Costanzo M.C."/>
            <person name="Dwight S.S."/>
            <person name="Hitz B.C."/>
            <person name="Karra K."/>
            <person name="Nash R.S."/>
            <person name="Weng S."/>
            <person name="Wong E.D."/>
            <person name="Lloyd P."/>
            <person name="Skrzypek M.S."/>
            <person name="Miyasato S.R."/>
            <person name="Simison M."/>
            <person name="Cherry J.M."/>
        </authorList>
    </citation>
    <scope>GENOME REANNOTATION</scope>
    <source>
        <strain>ATCC 204508 / S288c</strain>
    </source>
</reference>
<feature type="chain" id="PRO_0000202536" description="Putative uncharacterized protein YBR300C">
    <location>
        <begin position="1"/>
        <end position="165"/>
    </location>
</feature>
<feature type="transmembrane region" description="Helical" evidence="1">
    <location>
        <begin position="10"/>
        <end position="27"/>
    </location>
</feature>
<accession>P38362</accession>
<sequence>MAATPAAIEVSLTIVFVLFFSADVSLTRNSEMKAHTSKMDSYSSSIYMNVLPTSLAQTSYHLAPISHLKCLSVQFSSHIHYSYYYGASVLERCVFHRSRIRGARFIVPIPFIAFPRHKNVFSQCTYFRRIPLGCLQRCSCSFWPRKSQNQICFEPSLRGHLIFVL</sequence>
<organism>
    <name type="scientific">Saccharomyces cerevisiae (strain ATCC 204508 / S288c)</name>
    <name type="common">Baker's yeast</name>
    <dbReference type="NCBI Taxonomy" id="559292"/>
    <lineage>
        <taxon>Eukaryota</taxon>
        <taxon>Fungi</taxon>
        <taxon>Dikarya</taxon>
        <taxon>Ascomycota</taxon>
        <taxon>Saccharomycotina</taxon>
        <taxon>Saccharomycetes</taxon>
        <taxon>Saccharomycetales</taxon>
        <taxon>Saccharomycetaceae</taxon>
        <taxon>Saccharomyces</taxon>
    </lineage>
</organism>
<dbReference type="EMBL" id="Z36169">
    <property type="protein sequence ID" value="CAA85265.1"/>
    <property type="molecule type" value="Genomic_DNA"/>
</dbReference>
<dbReference type="PIR" id="S46184">
    <property type="entry name" value="S46184"/>
</dbReference>
<dbReference type="DIP" id="DIP-4900N"/>
<dbReference type="IntAct" id="P38362">
    <property type="interactions" value="1"/>
</dbReference>
<dbReference type="STRING" id="4932.YBR300C"/>
<dbReference type="PaxDb" id="4932-YBR300C"/>
<dbReference type="EnsemblFungi" id="YBR300C_mRNA">
    <property type="protein sequence ID" value="YBR300C"/>
    <property type="gene ID" value="YBR300C"/>
</dbReference>
<dbReference type="AGR" id="SGD:S000000504"/>
<dbReference type="SGD" id="S000000504">
    <property type="gene designation" value="YBR300C"/>
</dbReference>
<dbReference type="GeneTree" id="ENSGT00940000180855"/>
<dbReference type="HOGENOM" id="CLU_1612104_0_0_1"/>
<dbReference type="GO" id="GO:0016020">
    <property type="term" value="C:membrane"/>
    <property type="evidence" value="ECO:0007669"/>
    <property type="project" value="UniProtKB-SubCell"/>
</dbReference>
<proteinExistence type="uncertain"/>
<comment type="subcellular location">
    <subcellularLocation>
        <location evidence="2">Membrane</location>
        <topology evidence="2">Single-pass membrane protein</topology>
    </subcellularLocation>
</comment>
<comment type="miscellaneous">
    <text evidence="2">Partially overlaps DAN3.</text>
</comment>
<comment type="caution">
    <text evidence="3">Product of a dubious gene prediction unlikely to encode a functional protein. Because of that it is not part of the S.cerevisiae S288c complete/reference proteome set.</text>
</comment>
<keyword id="KW-0472">Membrane</keyword>
<keyword id="KW-0812">Transmembrane</keyword>
<keyword id="KW-1133">Transmembrane helix</keyword>
<gene>
    <name type="ordered locus">YBR300C</name>
    <name type="ORF">YBR2120</name>
</gene>
<name>YB8J_YEAST</name>
<evidence type="ECO:0000255" key="1"/>
<evidence type="ECO:0000305" key="2"/>
<evidence type="ECO:0000305" key="3">
    <source>
    </source>
</evidence>
<protein>
    <recommendedName>
        <fullName>Putative uncharacterized protein YBR300C</fullName>
    </recommendedName>
</protein>